<organism>
    <name type="scientific">Haemophilus influenzae (strain 86-028NP)</name>
    <dbReference type="NCBI Taxonomy" id="281310"/>
    <lineage>
        <taxon>Bacteria</taxon>
        <taxon>Pseudomonadati</taxon>
        <taxon>Pseudomonadota</taxon>
        <taxon>Gammaproteobacteria</taxon>
        <taxon>Pasteurellales</taxon>
        <taxon>Pasteurellaceae</taxon>
        <taxon>Haemophilus</taxon>
    </lineage>
</organism>
<keyword id="KW-0378">Hydrolase</keyword>
<keyword id="KW-0479">Metal-binding</keyword>
<keyword id="KW-0862">Zinc</keyword>
<accession>Q4QK60</accession>
<proteinExistence type="inferred from homology"/>
<dbReference type="EC" id="3.5.4.5" evidence="1"/>
<dbReference type="EMBL" id="CP000057">
    <property type="protein sequence ID" value="AAX88587.1"/>
    <property type="molecule type" value="Genomic_DNA"/>
</dbReference>
<dbReference type="RefSeq" id="WP_005650690.1">
    <property type="nucleotide sequence ID" value="NC_007146.2"/>
</dbReference>
<dbReference type="SMR" id="Q4QK60"/>
<dbReference type="GeneID" id="93220528"/>
<dbReference type="KEGG" id="hit:NTHI1816"/>
<dbReference type="HOGENOM" id="CLU_052424_0_0_6"/>
<dbReference type="Proteomes" id="UP000002525">
    <property type="component" value="Chromosome"/>
</dbReference>
<dbReference type="GO" id="GO:0005829">
    <property type="term" value="C:cytosol"/>
    <property type="evidence" value="ECO:0007669"/>
    <property type="project" value="TreeGrafter"/>
</dbReference>
<dbReference type="GO" id="GO:0004126">
    <property type="term" value="F:cytidine deaminase activity"/>
    <property type="evidence" value="ECO:0007669"/>
    <property type="project" value="UniProtKB-UniRule"/>
</dbReference>
<dbReference type="GO" id="GO:0042802">
    <property type="term" value="F:identical protein binding"/>
    <property type="evidence" value="ECO:0007669"/>
    <property type="project" value="UniProtKB-ARBA"/>
</dbReference>
<dbReference type="GO" id="GO:0008270">
    <property type="term" value="F:zinc ion binding"/>
    <property type="evidence" value="ECO:0007669"/>
    <property type="project" value="UniProtKB-UniRule"/>
</dbReference>
<dbReference type="GO" id="GO:0009972">
    <property type="term" value="P:cytidine deamination"/>
    <property type="evidence" value="ECO:0007669"/>
    <property type="project" value="InterPro"/>
</dbReference>
<dbReference type="CDD" id="cd01283">
    <property type="entry name" value="cytidine_deaminase"/>
    <property type="match status" value="2"/>
</dbReference>
<dbReference type="FunFam" id="3.40.140.10:FF:000007">
    <property type="entry name" value="Cytidine deaminase"/>
    <property type="match status" value="1"/>
</dbReference>
<dbReference type="Gene3D" id="3.40.140.10">
    <property type="entry name" value="Cytidine Deaminase, domain 2"/>
    <property type="match status" value="2"/>
</dbReference>
<dbReference type="HAMAP" id="MF_01558">
    <property type="entry name" value="Cyt_deam"/>
    <property type="match status" value="1"/>
</dbReference>
<dbReference type="InterPro" id="IPR016192">
    <property type="entry name" value="APOBEC/CMP_deaminase_Zn-bd"/>
</dbReference>
<dbReference type="InterPro" id="IPR002125">
    <property type="entry name" value="CMP_dCMP_dom"/>
</dbReference>
<dbReference type="InterPro" id="IPR013171">
    <property type="entry name" value="Cyd/dCyd_deaminase_Zn-bd"/>
</dbReference>
<dbReference type="InterPro" id="IPR050202">
    <property type="entry name" value="Cyt/Deoxycyt_deaminase"/>
</dbReference>
<dbReference type="InterPro" id="IPR006263">
    <property type="entry name" value="Cyt_deam_dimer"/>
</dbReference>
<dbReference type="InterPro" id="IPR016193">
    <property type="entry name" value="Cytidine_deaminase-like"/>
</dbReference>
<dbReference type="InterPro" id="IPR020797">
    <property type="entry name" value="Cytidine_deaminase_bacteria"/>
</dbReference>
<dbReference type="NCBIfam" id="TIGR01355">
    <property type="entry name" value="cyt_deam_dimer"/>
    <property type="match status" value="1"/>
</dbReference>
<dbReference type="NCBIfam" id="NF006537">
    <property type="entry name" value="PRK09027.1"/>
    <property type="match status" value="1"/>
</dbReference>
<dbReference type="PANTHER" id="PTHR11644">
    <property type="entry name" value="CYTIDINE DEAMINASE"/>
    <property type="match status" value="1"/>
</dbReference>
<dbReference type="PANTHER" id="PTHR11644:SF2">
    <property type="entry name" value="CYTIDINE DEAMINASE"/>
    <property type="match status" value="1"/>
</dbReference>
<dbReference type="Pfam" id="PF00383">
    <property type="entry name" value="dCMP_cyt_deam_1"/>
    <property type="match status" value="1"/>
</dbReference>
<dbReference type="Pfam" id="PF08211">
    <property type="entry name" value="dCMP_cyt_deam_2"/>
    <property type="match status" value="1"/>
</dbReference>
<dbReference type="PIRSF" id="PIRSF006334">
    <property type="entry name" value="Cdd_plus_pseudo"/>
    <property type="match status" value="1"/>
</dbReference>
<dbReference type="SUPFAM" id="SSF53927">
    <property type="entry name" value="Cytidine deaminase-like"/>
    <property type="match status" value="2"/>
</dbReference>
<dbReference type="PROSITE" id="PS00903">
    <property type="entry name" value="CYT_DCMP_DEAMINASES_1"/>
    <property type="match status" value="1"/>
</dbReference>
<dbReference type="PROSITE" id="PS51747">
    <property type="entry name" value="CYT_DCMP_DEAMINASES_2"/>
    <property type="match status" value="2"/>
</dbReference>
<gene>
    <name evidence="1" type="primary">cdd</name>
    <name type="ordered locus">NTHI1816</name>
</gene>
<name>CDD_HAEI8</name>
<reference key="1">
    <citation type="journal article" date="2005" name="J. Bacteriol.">
        <title>Genomic sequence of an otitis media isolate of nontypeable Haemophilus influenzae: comparative study with H. influenzae serotype d, strain KW20.</title>
        <authorList>
            <person name="Harrison A."/>
            <person name="Dyer D.W."/>
            <person name="Gillaspy A."/>
            <person name="Ray W.C."/>
            <person name="Mungur R."/>
            <person name="Carson M.B."/>
            <person name="Zhong H."/>
            <person name="Gipson J."/>
            <person name="Gipson M."/>
            <person name="Johnson L.S."/>
            <person name="Lewis L."/>
            <person name="Bakaletz L.O."/>
            <person name="Munson R.S. Jr."/>
        </authorList>
    </citation>
    <scope>NUCLEOTIDE SEQUENCE [LARGE SCALE GENOMIC DNA]</scope>
    <source>
        <strain>86-028NP</strain>
    </source>
</reference>
<comment type="function">
    <text evidence="1">This enzyme scavenges exogenous and endogenous cytidine and 2'-deoxycytidine for UMP synthesis.</text>
</comment>
<comment type="catalytic activity">
    <reaction evidence="1">
        <text>cytidine + H2O + H(+) = uridine + NH4(+)</text>
        <dbReference type="Rhea" id="RHEA:16069"/>
        <dbReference type="ChEBI" id="CHEBI:15377"/>
        <dbReference type="ChEBI" id="CHEBI:15378"/>
        <dbReference type="ChEBI" id="CHEBI:16704"/>
        <dbReference type="ChEBI" id="CHEBI:17562"/>
        <dbReference type="ChEBI" id="CHEBI:28938"/>
        <dbReference type="EC" id="3.5.4.5"/>
    </reaction>
</comment>
<comment type="catalytic activity">
    <reaction evidence="1">
        <text>2'-deoxycytidine + H2O + H(+) = 2'-deoxyuridine + NH4(+)</text>
        <dbReference type="Rhea" id="RHEA:13433"/>
        <dbReference type="ChEBI" id="CHEBI:15377"/>
        <dbReference type="ChEBI" id="CHEBI:15378"/>
        <dbReference type="ChEBI" id="CHEBI:15698"/>
        <dbReference type="ChEBI" id="CHEBI:16450"/>
        <dbReference type="ChEBI" id="CHEBI:28938"/>
        <dbReference type="EC" id="3.5.4.5"/>
    </reaction>
</comment>
<comment type="cofactor">
    <cofactor evidence="1">
        <name>Zn(2+)</name>
        <dbReference type="ChEBI" id="CHEBI:29105"/>
    </cofactor>
    <text evidence="1">Binds 1 zinc ion.</text>
</comment>
<comment type="subunit">
    <text evidence="1">Homodimer.</text>
</comment>
<comment type="similarity">
    <text evidence="1">Belongs to the cytidine and deoxycytidylate deaminase family.</text>
</comment>
<sequence>MQELIKRTLPQDDALNQAIVNELRSQNWAGFLNYSQVQQLCHNFELTPLKLAMHLLPLAASYSHTAISHFNVGAIAIGEQGDFYFGANQEFANSAIQQTIHAEQSAISHAWLRNERRISDMVVNYTPCGHCRQFMNELHGAEKISIHLPHSQNNPLHSYLPDAFGPKDLDIAAHLLAEENHDLVADHQDDLVNQAILAANQSHCPYSNSPHGIAILFKNGDVVTGRYAENAAFNPSLPALQTALNFAYLNDKKLSDIERIVMAEKALKLSHKTMAETLLSTLTSVELEYYSL</sequence>
<protein>
    <recommendedName>
        <fullName evidence="1">Cytidine deaminase</fullName>
        <ecNumber evidence="1">3.5.4.5</ecNumber>
    </recommendedName>
    <alternativeName>
        <fullName evidence="1">Cytidine aminohydrolase</fullName>
        <shortName evidence="1">CDA</shortName>
    </alternativeName>
</protein>
<evidence type="ECO:0000255" key="1">
    <source>
        <dbReference type="HAMAP-Rule" id="MF_01558"/>
    </source>
</evidence>
<evidence type="ECO:0000255" key="2">
    <source>
        <dbReference type="PROSITE-ProRule" id="PRU01083"/>
    </source>
</evidence>
<feature type="chain" id="PRO_0000171654" description="Cytidine deaminase">
    <location>
        <begin position="1"/>
        <end position="292"/>
    </location>
</feature>
<feature type="domain" description="CMP/dCMP-type deaminase 1" evidence="2">
    <location>
        <begin position="47"/>
        <end position="167"/>
    </location>
</feature>
<feature type="domain" description="CMP/dCMP-type deaminase 2" evidence="2">
    <location>
        <begin position="186"/>
        <end position="292"/>
    </location>
</feature>
<feature type="active site" description="Proton donor" evidence="1">
    <location>
        <position position="103"/>
    </location>
</feature>
<feature type="binding site" evidence="1">
    <location>
        <begin position="88"/>
        <end position="90"/>
    </location>
    <ligand>
        <name>substrate</name>
    </ligand>
</feature>
<feature type="binding site" evidence="1">
    <location>
        <position position="101"/>
    </location>
    <ligand>
        <name>Zn(2+)</name>
        <dbReference type="ChEBI" id="CHEBI:29105"/>
        <note>catalytic</note>
    </ligand>
</feature>
<feature type="binding site" evidence="1">
    <location>
        <position position="128"/>
    </location>
    <ligand>
        <name>Zn(2+)</name>
        <dbReference type="ChEBI" id="CHEBI:29105"/>
        <note>catalytic</note>
    </ligand>
</feature>
<feature type="binding site" evidence="1">
    <location>
        <position position="131"/>
    </location>
    <ligand>
        <name>Zn(2+)</name>
        <dbReference type="ChEBI" id="CHEBI:29105"/>
        <note>catalytic</note>
    </ligand>
</feature>